<keyword id="KW-0007">Acetylation</keyword>
<keyword id="KW-0963">Cytoplasm</keyword>
<keyword id="KW-0539">Nucleus</keyword>
<keyword id="KW-0597">Phosphoprotein</keyword>
<keyword id="KW-0647">Proteasome</keyword>
<keyword id="KW-1185">Reference proteome</keyword>
<accession>Q29384</accession>
<dbReference type="EMBL" id="F14598">
    <property type="protein sequence ID" value="CAA23147.1"/>
    <property type="molecule type" value="mRNA"/>
</dbReference>
<dbReference type="FunCoup" id="Q29384">
    <property type="interactions" value="834"/>
</dbReference>
<dbReference type="STRING" id="9823.ENSSSCP00000049519"/>
<dbReference type="MEROPS" id="T01.987"/>
<dbReference type="GlyGen" id="Q29384">
    <property type="glycosylation" value="1 site"/>
</dbReference>
<dbReference type="PaxDb" id="9823-ENSSSCP00000007062"/>
<dbReference type="PeptideAtlas" id="Q29384"/>
<dbReference type="eggNOG" id="KOG0185">
    <property type="taxonomic scope" value="Eukaryota"/>
</dbReference>
<dbReference type="InParanoid" id="Q29384"/>
<dbReference type="ChiTaRS" id="PSMB4">
    <property type="organism name" value="pig"/>
</dbReference>
<dbReference type="Proteomes" id="UP000008227">
    <property type="component" value="Unplaced"/>
</dbReference>
<dbReference type="Proteomes" id="UP000314985">
    <property type="component" value="Unplaced"/>
</dbReference>
<dbReference type="Proteomes" id="UP000694570">
    <property type="component" value="Unplaced"/>
</dbReference>
<dbReference type="Proteomes" id="UP000694571">
    <property type="component" value="Unplaced"/>
</dbReference>
<dbReference type="Proteomes" id="UP000694720">
    <property type="component" value="Unplaced"/>
</dbReference>
<dbReference type="Proteomes" id="UP000694722">
    <property type="component" value="Unplaced"/>
</dbReference>
<dbReference type="Proteomes" id="UP000694723">
    <property type="component" value="Unplaced"/>
</dbReference>
<dbReference type="Proteomes" id="UP000694724">
    <property type="component" value="Unplaced"/>
</dbReference>
<dbReference type="Proteomes" id="UP000694725">
    <property type="component" value="Unplaced"/>
</dbReference>
<dbReference type="Proteomes" id="UP000694726">
    <property type="component" value="Unplaced"/>
</dbReference>
<dbReference type="Proteomes" id="UP000694727">
    <property type="component" value="Unplaced"/>
</dbReference>
<dbReference type="Proteomes" id="UP000694728">
    <property type="component" value="Unplaced"/>
</dbReference>
<dbReference type="GO" id="GO:0005737">
    <property type="term" value="C:cytoplasm"/>
    <property type="evidence" value="ECO:0007669"/>
    <property type="project" value="UniProtKB-SubCell"/>
</dbReference>
<dbReference type="GO" id="GO:0005634">
    <property type="term" value="C:nucleus"/>
    <property type="evidence" value="ECO:0007669"/>
    <property type="project" value="UniProtKB-SubCell"/>
</dbReference>
<dbReference type="GO" id="GO:0005839">
    <property type="term" value="C:proteasome core complex"/>
    <property type="evidence" value="ECO:0000250"/>
    <property type="project" value="UniProtKB"/>
</dbReference>
<dbReference type="GO" id="GO:0019774">
    <property type="term" value="C:proteasome core complex, beta-subunit complex"/>
    <property type="evidence" value="ECO:0000250"/>
    <property type="project" value="UniProtKB"/>
</dbReference>
<dbReference type="GO" id="GO:0051603">
    <property type="term" value="P:proteolysis involved in protein catabolic process"/>
    <property type="evidence" value="ECO:0007669"/>
    <property type="project" value="InterPro"/>
</dbReference>
<dbReference type="Gene3D" id="3.60.20.10">
    <property type="entry name" value="Glutamine Phosphoribosylpyrophosphate, subunit 1, domain 1"/>
    <property type="match status" value="1"/>
</dbReference>
<dbReference type="InterPro" id="IPR029055">
    <property type="entry name" value="Ntn_hydrolases_N"/>
</dbReference>
<dbReference type="InterPro" id="IPR016050">
    <property type="entry name" value="Proteasome_bsu_CS"/>
</dbReference>
<dbReference type="InterPro" id="IPR001353">
    <property type="entry name" value="Proteasome_sua/b"/>
</dbReference>
<dbReference type="InterPro" id="IPR023333">
    <property type="entry name" value="Proteasome_suB-type"/>
</dbReference>
<dbReference type="PANTHER" id="PTHR32194">
    <property type="entry name" value="METALLOPROTEASE TLDD"/>
    <property type="match status" value="1"/>
</dbReference>
<dbReference type="PANTHER" id="PTHR32194:SF6">
    <property type="entry name" value="PROTEASOME SUBUNIT BETA"/>
    <property type="match status" value="1"/>
</dbReference>
<dbReference type="Pfam" id="PF00227">
    <property type="entry name" value="Proteasome"/>
    <property type="match status" value="1"/>
</dbReference>
<dbReference type="SUPFAM" id="SSF56235">
    <property type="entry name" value="N-terminal nucleophile aminohydrolases (Ntn hydrolases)"/>
    <property type="match status" value="1"/>
</dbReference>
<dbReference type="PROSITE" id="PS00854">
    <property type="entry name" value="PROTEASOME_BETA_1"/>
    <property type="match status" value="1"/>
</dbReference>
<dbReference type="PROSITE" id="PS51476">
    <property type="entry name" value="PROTEASOME_BETA_2"/>
    <property type="match status" value="1"/>
</dbReference>
<reference key="1">
    <citation type="journal article" date="1996" name="Mamm. Genome">
        <title>Evaluation and characterization of a porcine small intestine cDNA library: analysis of 839 clones.</title>
        <authorList>
            <person name="Winteroe A.K."/>
            <person name="Fredholm M."/>
            <person name="Davies W."/>
        </authorList>
    </citation>
    <scope>NUCLEOTIDE SEQUENCE [LARGE SCALE MRNA]</scope>
    <source>
        <tissue>Small intestine</tissue>
    </source>
</reference>
<gene>
    <name type="primary">PSMB4</name>
</gene>
<comment type="function">
    <text evidence="2">Non-catalytic component of the 20S core proteasome complex involved in the proteolytic degradation of most intracellular proteins. This complex plays numerous essential roles within the cell by associating with different regulatory particles. Associated with two 19S regulatory particles, forms the 26S proteasome and thus participates in the ATP-dependent degradation of ubiquitinated proteins. The 26S proteasome plays a key role in the maintenance of protein homeostasis by removing misfolded or damaged proteins that could impair cellular functions, and by removing proteins whose functions are no longer required. Associated with the PA200 or PA28, the 20S proteasome mediates ubiquitin-independent protein degradation. This type of proteolysis is required in several pathways including spermatogenesis (20S-PA200 complex) or generation of a subset of MHC class I-presented antigenic peptides (20S-PA28 complex). SMAD1/OAZ1/PSMB4 complex mediates the degradation of the CREBBP/EP300 repressor SNIP1.</text>
</comment>
<comment type="subunit">
    <text evidence="2">The 26S proteasome consists of a 20S proteasome core and two 19S regulatory subunits. The 20S proteasome core is a barrel-shaped complex made of 28 subunits that are arranged in four stacked rings. The two outer rings are each formed by seven alpha subunits, and the two inner rings are formed by seven beta subunits. The proteolytic activity is exerted by three beta-subunits PSMB5, PSMB6 and PSMB7. Forms a ternary complex with SMAD1 and OAZ1 before PSMB4 is incorporated into the 20S proteasome. Interacts with PRPF19.</text>
</comment>
<comment type="subcellular location">
    <subcellularLocation>
        <location evidence="2">Cytoplasm</location>
    </subcellularLocation>
    <subcellularLocation>
        <location evidence="2">Nucleus</location>
    </subcellularLocation>
    <text evidence="2">Translocated from the cytoplasm into the nucleus following interaction with AKIRIN2, which bridges the proteasome with the nuclear import receptor IPO9.</text>
</comment>
<comment type="similarity">
    <text evidence="3">Belongs to the peptidase T1B family.</text>
</comment>
<name>PSB4_PIG</name>
<evidence type="ECO:0000250" key="1"/>
<evidence type="ECO:0000250" key="2">
    <source>
        <dbReference type="UniProtKB" id="P28070"/>
    </source>
</evidence>
<evidence type="ECO:0000255" key="3">
    <source>
        <dbReference type="PROSITE-ProRule" id="PRU00809"/>
    </source>
</evidence>
<organism>
    <name type="scientific">Sus scrofa</name>
    <name type="common">Pig</name>
    <dbReference type="NCBI Taxonomy" id="9823"/>
    <lineage>
        <taxon>Eukaryota</taxon>
        <taxon>Metazoa</taxon>
        <taxon>Chordata</taxon>
        <taxon>Craniata</taxon>
        <taxon>Vertebrata</taxon>
        <taxon>Euteleostomi</taxon>
        <taxon>Mammalia</taxon>
        <taxon>Eutheria</taxon>
        <taxon>Laurasiatheria</taxon>
        <taxon>Artiodactyla</taxon>
        <taxon>Suina</taxon>
        <taxon>Suidae</taxon>
        <taxon>Sus</taxon>
    </lineage>
</organism>
<feature type="propeptide" id="PRO_0000026585" evidence="1">
    <location>
        <begin position="1"/>
        <end position="45"/>
    </location>
</feature>
<feature type="chain" id="PRO_0000026586" description="Proteasome subunit beta type-4">
    <location>
        <begin position="46"/>
        <end position="154" status="greater than"/>
    </location>
</feature>
<feature type="modified residue" description="N-acetylmethionine" evidence="2">
    <location>
        <position position="1"/>
    </location>
</feature>
<feature type="modified residue" description="Phosphotyrosine" evidence="2">
    <location>
        <position position="102"/>
    </location>
</feature>
<feature type="non-terminal residue">
    <location>
        <position position="154"/>
    </location>
</feature>
<proteinExistence type="evidence at transcript level"/>
<sequence length="154" mass="16928">MESILESRSGHWAGGPAPGQFYRIPPTPGSIVDPXSVLYGSPITRTQNPMVTGTSVLGVKFEGGVVIAADMLGSYGSLARFRNISRIMRVNNSTMLGASGDYADFQYLKQVLGQMVIDEELLGDGHSYSPKAIHSWLTRAMYNRRFKMNPLWTT</sequence>
<protein>
    <recommendedName>
        <fullName>Proteasome subunit beta type-4</fullName>
    </recommendedName>
    <alternativeName>
        <fullName>Macropain beta chain</fullName>
    </alternativeName>
    <alternativeName>
        <fullName>Multicatalytic endopeptidase complex beta chain</fullName>
    </alternativeName>
    <alternativeName>
        <fullName>Proteasome beta chain</fullName>
    </alternativeName>
    <alternativeName>
        <fullName>Proteasome chain 3</fullName>
    </alternativeName>
</protein>